<proteinExistence type="evidence at transcript level"/>
<feature type="signal peptide" evidence="1">
    <location>
        <begin position="1"/>
        <end position="19"/>
    </location>
</feature>
<feature type="chain" id="PRO_0000012955" description="Taste receptor type 1 member 1">
    <location>
        <begin position="20"/>
        <end position="842"/>
    </location>
</feature>
<feature type="topological domain" description="Extracellular" evidence="1">
    <location>
        <begin position="20"/>
        <end position="568"/>
    </location>
</feature>
<feature type="transmembrane region" description="Helical; Name=1" evidence="1">
    <location>
        <begin position="569"/>
        <end position="589"/>
    </location>
</feature>
<feature type="topological domain" description="Cytoplasmic" evidence="1">
    <location>
        <begin position="590"/>
        <end position="604"/>
    </location>
</feature>
<feature type="transmembrane region" description="Helical; Name=2" evidence="1">
    <location>
        <begin position="605"/>
        <end position="625"/>
    </location>
</feature>
<feature type="topological domain" description="Extracellular" evidence="1">
    <location>
        <begin position="626"/>
        <end position="640"/>
    </location>
</feature>
<feature type="transmembrane region" description="Helical; Name=3" evidence="1">
    <location>
        <begin position="641"/>
        <end position="661"/>
    </location>
</feature>
<feature type="topological domain" description="Cytoplasmic" evidence="1">
    <location>
        <begin position="662"/>
        <end position="681"/>
    </location>
</feature>
<feature type="transmembrane region" description="Helical; Name=4" evidence="1">
    <location>
        <begin position="682"/>
        <end position="702"/>
    </location>
</feature>
<feature type="topological domain" description="Extracellular" evidence="1">
    <location>
        <begin position="703"/>
        <end position="725"/>
    </location>
</feature>
<feature type="transmembrane region" description="Helical; Name=5" evidence="1">
    <location>
        <begin position="726"/>
        <end position="746"/>
    </location>
</feature>
<feature type="topological domain" description="Cytoplasmic" evidence="1">
    <location>
        <begin position="747"/>
        <end position="762"/>
    </location>
</feature>
<feature type="transmembrane region" description="Helical; Name=6" evidence="1">
    <location>
        <begin position="763"/>
        <end position="783"/>
    </location>
</feature>
<feature type="topological domain" description="Extracellular" evidence="1">
    <location>
        <begin position="784"/>
        <end position="789"/>
    </location>
</feature>
<feature type="transmembrane region" description="Helical; Name=7" evidence="1">
    <location>
        <begin position="790"/>
        <end position="810"/>
    </location>
</feature>
<feature type="topological domain" description="Cytoplasmic" evidence="1">
    <location>
        <begin position="811"/>
        <end position="842"/>
    </location>
</feature>
<feature type="glycosylation site" description="N-linked (GlcNAc...) asparagine" evidence="1">
    <location>
        <position position="88"/>
    </location>
</feature>
<feature type="glycosylation site" description="N-linked (GlcNAc...) asparagine" evidence="1">
    <location>
        <position position="89"/>
    </location>
</feature>
<feature type="glycosylation site" description="N-linked (GlcNAc...) asparagine" evidence="1">
    <location>
        <position position="96"/>
    </location>
</feature>
<feature type="glycosylation site" description="N-linked (GlcNAc...) asparagine" evidence="1">
    <location>
        <position position="136"/>
    </location>
</feature>
<feature type="glycosylation site" description="N-linked (GlcNAc...) asparagine" evidence="1">
    <location>
        <position position="292"/>
    </location>
</feature>
<feature type="glycosylation site" description="N-linked (GlcNAc...) asparagine" evidence="1">
    <location>
        <position position="480"/>
    </location>
</feature>
<feature type="glycosylation site" description="N-linked (GlcNAc...) asparagine" evidence="1">
    <location>
        <position position="530"/>
    </location>
</feature>
<feature type="sequence variant" description="In strain: 129/J." evidence="2">
    <original>N</original>
    <variation>D</variation>
    <location>
        <position position="244"/>
    </location>
</feature>
<feature type="sequence variant" description="In strain: 129/J." evidence="2">
    <original>D</original>
    <variation>A</variation>
    <location>
        <position position="281"/>
    </location>
</feature>
<feature type="sequence variant" description="In strain: 129/J." evidence="2">
    <original>NIPNVS</original>
    <variation>YITNVP</variation>
    <location>
        <begin position="309"/>
        <end position="314"/>
    </location>
</feature>
<feature type="sequence variant" description="In strain: 129/J." evidence="2">
    <original>M</original>
    <variation>T</variation>
    <location>
        <position position="347"/>
    </location>
</feature>
<feature type="sequence variant" description="In strain: 129/J." evidence="2">
    <original>H</original>
    <variation>Y</variation>
    <location>
        <position position="418"/>
    </location>
</feature>
<feature type="sequence variant" description="In strain: 129/J." evidence="2">
    <original>K</original>
    <variation>N</variation>
    <location>
        <position position="443"/>
    </location>
</feature>
<feature type="sequence variant" description="In strain: 129/J." evidence="2">
    <original>K</original>
    <variation>E</variation>
    <location>
        <position position="626"/>
    </location>
</feature>
<feature type="sequence conflict" description="In Ref. 3; AAK51603." evidence="5" ref="3">
    <original>L</original>
    <variation>P</variation>
    <location>
        <position position="120"/>
    </location>
</feature>
<feature type="sequence conflict" description="In Ref. 4." evidence="5" ref="4">
    <original>S</original>
    <variation>P</variation>
    <location>
        <position position="648"/>
    </location>
</feature>
<feature type="sequence conflict" description="In Ref. 4." evidence="5" ref="4">
    <original>C</original>
    <variation>F</variation>
    <location>
        <position position="649"/>
    </location>
</feature>
<feature type="sequence conflict" description="In Ref. 4." evidence="5" ref="4">
    <original>F</original>
    <variation>S</variation>
    <location>
        <position position="655"/>
    </location>
</feature>
<feature type="sequence conflict" description="In Ref. 4." evidence="5" ref="4">
    <original>I</original>
    <variation>V</variation>
    <location>
        <position position="659"/>
    </location>
</feature>
<feature type="sequence conflict" description="In Ref. 4." evidence="5" ref="4">
    <original>A</original>
    <variation>V</variation>
    <location>
        <position position="776"/>
    </location>
</feature>
<accession>Q99PG6</accession>
<accession>Q6NS58</accession>
<accession>Q923J9</accession>
<accession>Q925I5</accession>
<accession>Q99PG5</accession>
<organism>
    <name type="scientific">Mus musculus</name>
    <name type="common">Mouse</name>
    <dbReference type="NCBI Taxonomy" id="10090"/>
    <lineage>
        <taxon>Eukaryota</taxon>
        <taxon>Metazoa</taxon>
        <taxon>Chordata</taxon>
        <taxon>Craniata</taxon>
        <taxon>Vertebrata</taxon>
        <taxon>Euteleostomi</taxon>
        <taxon>Mammalia</taxon>
        <taxon>Eutheria</taxon>
        <taxon>Euarchontoglires</taxon>
        <taxon>Glires</taxon>
        <taxon>Rodentia</taxon>
        <taxon>Myomorpha</taxon>
        <taxon>Muroidea</taxon>
        <taxon>Muridae</taxon>
        <taxon>Murinae</taxon>
        <taxon>Mus</taxon>
        <taxon>Mus</taxon>
    </lineage>
</organism>
<gene>
    <name type="primary">Tas1r1</name>
    <name type="synonym">Gpr70</name>
    <name type="synonym">T1r1</name>
    <name type="synonym">Tr1</name>
</gene>
<sequence>MLFWAAHLLLSLQLAVAYCWAFSCQRTESSPGFSLPGDFLLAGLFSLHADCLQVRHRPLVTSCDRSDSFNGHGYHLFQAMRFTVEEINNSTALLPNITLGYELYDVCSESSNVYATLRVLAQQGTGHLEMQRDLRNHSSKVVALIGPDNTDHAVTTAALLSPFLMPLVSYEASSVILSGKRKFPSFLRTIPSDKYQVEVIVRLLQSFGWVWISLVGSYGDYGQLGVQALEELATPRGICVAFKNVVPLSAQAGDPRMQRMMLRLARARTTVVVVFSNRHLDGVFFRSVVLANLTGKVWIASEDWAISTNIPNVSGIQGIGTVLGVAIQQRQVPGLKEFEESYVQAVMGAPRTCPEGSWCGTNQLCRECHAFTTWNMPELGAFSMSAAYNVYEAVYAVAHGLHQLLGCTSGTCARGPVHPWQLLQQIYKVNFLLHKKTVAFDDKGDPLGYYDIIAWDWNGPEWTFEVIGSASLSPVHLDINKTKIQWHGKNNQVPVSVCTRDCLEGHHRLVMGSHHCCFECMPCEAGTFLNTSELHTCQPCGTEEWAPEGSSACFSRTVEFLGWHEPISLVLLAANTLLLLLLIGTAGLFAWRLHTPVVRSAGGRLCFLMLGSLVAGSCSLYSFFGKPTVPACLLRQPLFSLGFAIFLSCLTIRSFQLVIIFKFSTKVPTFYHTWAQNHGAGIFVIVSSTVHLFLCLTWLAMWTPRPTREYQRFPHLVILECTEVNSVGFLVAFAHNILLSISTFVCSYLGKELPENYNEAKCVTFSLLLHFVSWIAFFTMSSIYQGSYLPAVNVLAGLATLSGGFSGYFLPKCYVILCRPELNNTEHFQASIQDYTRRCGTT</sequence>
<comment type="function">
    <text evidence="4">Putative taste receptor. TAS1R1/TAS1R3 responds to the umami taste stimulus (the taste of monosodium glutamate) and also to most of the 20 standard L-amino acids, but not to their D-enantiomers or other compounds. Sequence differences within and between species can significantly influence the selectivity and specificity of taste responses.</text>
</comment>
<comment type="subunit">
    <text>Forms heterodimers with TAS1R3.</text>
</comment>
<comment type="subcellular location">
    <subcellularLocation>
        <location>Cell membrane</location>
        <topology>Multi-pass membrane protein</topology>
    </subcellularLocation>
</comment>
<comment type="tissue specificity">
    <text evidence="3">Expressed strongly only in fungiform papillae.</text>
</comment>
<comment type="similarity">
    <text evidence="5">Belongs to the G-protein coupled receptor 3 family. TAS1R subfamily.</text>
</comment>
<reference key="1">
    <citation type="journal article" date="2001" name="Cell">
        <title>Mammalian sweet taste receptors.</title>
        <authorList>
            <person name="Nelson G."/>
            <person name="Hoon M.A."/>
            <person name="Chandrashekar J."/>
            <person name="Zhang Y."/>
            <person name="Ryba N.J.P."/>
            <person name="Zuker C.S."/>
        </authorList>
    </citation>
    <scope>NUCLEOTIDE SEQUENCE [MRNA]</scope>
</reference>
<reference key="2">
    <citation type="journal article" date="2001" name="Mamm. Genome">
        <title>High-resolution genetic mapping of the saccharin preference locus (Sac) and the putative sweet taste receptor (T1R1) gene (Gpr70) to mouse distal chromosome 4.</title>
        <authorList>
            <person name="Li X."/>
            <person name="Inoue M."/>
            <person name="Reed D.R."/>
            <person name="Huque T."/>
            <person name="Puchalski R.B."/>
            <person name="Tordoff M.G."/>
            <person name="Ninomiya Y."/>
            <person name="Beauchamp G.K."/>
            <person name="Bachmanov A.A."/>
        </authorList>
    </citation>
    <scope>NUCLEOTIDE SEQUENCE [MRNA]</scope>
    <scope>VARIANTS ASP-244; ALA-281; 309-ASN--SER-314 DELINS TYR-ILE-THR-ASN-VAL-PRO; THR-347; TYR-418; ASN-443 AND GLU-626</scope>
    <source>
        <strain>129/J</strain>
        <strain>C57BL/6ByJ</strain>
    </source>
</reference>
<reference key="3">
    <citation type="journal article" date="2001" name="Nat. Neurosci.">
        <title>A candidate taste receptor gene near a sweet taste locus.</title>
        <authorList>
            <person name="Montmayeur J.-P."/>
            <person name="Liberles S.D."/>
            <person name="Matsunami H."/>
            <person name="Buck L.B."/>
        </authorList>
    </citation>
    <scope>NUCLEOTIDE SEQUENCE [MRNA]</scope>
    <scope>TISSUE SPECIFICITY</scope>
    <source>
        <strain>C57BL/6J</strain>
        <tissue>Circumvallate papilla</tissue>
        <tissue>Foliate papilla</tissue>
    </source>
</reference>
<reference key="4">
    <citation type="journal article" date="2003" name="In Vitro Cell. Dev. Biol. Anim.">
        <title>Taste receptor T1R3 is an essential molecule for the cellular recognition of the disaccharide trehalose.</title>
        <authorList>
            <person name="Ariyasu T."/>
            <person name="Matsumoto S."/>
            <person name="Kyono F."/>
            <person name="Hanaya T."/>
            <person name="Arai S."/>
            <person name="Ikeda M."/>
            <person name="Kurimoto M."/>
        </authorList>
    </citation>
    <scope>NUCLEOTIDE SEQUENCE [MRNA]</scope>
    <source>
        <strain>C57BL/6J</strain>
    </source>
</reference>
<reference key="5">
    <citation type="journal article" date="2002" name="Nature">
        <title>An amino-acid taste receptor.</title>
        <authorList>
            <person name="Nelson G."/>
            <person name="Chandrashekar J."/>
            <person name="Hoon M.A."/>
            <person name="Feng L."/>
            <person name="Zhao G."/>
            <person name="Ryba N.J.P."/>
            <person name="Zuker C.S."/>
        </authorList>
    </citation>
    <scope>FUNCTION</scope>
</reference>
<dbReference type="EMBL" id="AY032622">
    <property type="protein sequence ID" value="AAK51603.1"/>
    <property type="molecule type" value="mRNA"/>
</dbReference>
<dbReference type="EMBL" id="AF301161">
    <property type="protein sequence ID" value="AAK07091.1"/>
    <property type="molecule type" value="mRNA"/>
</dbReference>
<dbReference type="EMBL" id="AF301162">
    <property type="protein sequence ID" value="AAK07092.1"/>
    <property type="molecule type" value="mRNA"/>
</dbReference>
<dbReference type="EMBL" id="AF337040">
    <property type="protein sequence ID" value="AAK39437.1"/>
    <property type="molecule type" value="mRNA"/>
</dbReference>
<dbReference type="CCDS" id="CCDS18985.1"/>
<dbReference type="RefSeq" id="NP_114073.1">
    <property type="nucleotide sequence ID" value="NM_031867.2"/>
</dbReference>
<dbReference type="SMR" id="Q99PG6"/>
<dbReference type="CORUM" id="Q99PG6"/>
<dbReference type="FunCoup" id="Q99PG6">
    <property type="interactions" value="96"/>
</dbReference>
<dbReference type="STRING" id="10090.ENSMUSP00000030792"/>
<dbReference type="GlyCosmos" id="Q99PG6">
    <property type="glycosylation" value="7 sites, No reported glycans"/>
</dbReference>
<dbReference type="GlyGen" id="Q99PG6">
    <property type="glycosylation" value="7 sites"/>
</dbReference>
<dbReference type="PhosphoSitePlus" id="Q99PG6"/>
<dbReference type="PaxDb" id="10090-ENSMUSP00000030792"/>
<dbReference type="DNASU" id="110326"/>
<dbReference type="GeneID" id="110326"/>
<dbReference type="KEGG" id="mmu:110326"/>
<dbReference type="AGR" id="MGI:1927505"/>
<dbReference type="CTD" id="80835"/>
<dbReference type="MGI" id="MGI:1927505">
    <property type="gene designation" value="Tas1r1"/>
</dbReference>
<dbReference type="eggNOG" id="KOG1056">
    <property type="taxonomic scope" value="Eukaryota"/>
</dbReference>
<dbReference type="InParanoid" id="Q99PG6"/>
<dbReference type="OrthoDB" id="5984008at2759"/>
<dbReference type="PhylomeDB" id="Q99PG6"/>
<dbReference type="Reactome" id="R-MMU-418594">
    <property type="pathway name" value="G alpha (i) signalling events"/>
</dbReference>
<dbReference type="Reactome" id="R-MMU-420499">
    <property type="pathway name" value="Class C/3 (Metabotropic glutamate/pheromone receptors)"/>
</dbReference>
<dbReference type="Reactome" id="R-MMU-9717207">
    <property type="pathway name" value="Sensory perception of sweet, bitter, and umami (glutamate) taste"/>
</dbReference>
<dbReference type="BioGRID-ORCS" id="110326">
    <property type="hits" value="5 hits in 76 CRISPR screens"/>
</dbReference>
<dbReference type="PRO" id="PR:Q99PG6"/>
<dbReference type="Proteomes" id="UP000000589">
    <property type="component" value="Unplaced"/>
</dbReference>
<dbReference type="RNAct" id="Q99PG6">
    <property type="molecule type" value="protein"/>
</dbReference>
<dbReference type="GO" id="GO:0005886">
    <property type="term" value="C:plasma membrane"/>
    <property type="evidence" value="ECO:0007669"/>
    <property type="project" value="UniProtKB-SubCell"/>
</dbReference>
<dbReference type="GO" id="GO:0004930">
    <property type="term" value="F:G protein-coupled receptor activity"/>
    <property type="evidence" value="ECO:0007669"/>
    <property type="project" value="UniProtKB-KW"/>
</dbReference>
<dbReference type="GO" id="GO:0050909">
    <property type="term" value="P:sensory perception of taste"/>
    <property type="evidence" value="ECO:0007669"/>
    <property type="project" value="UniProtKB-KW"/>
</dbReference>
<dbReference type="CDD" id="cd15289">
    <property type="entry name" value="7tmC_TAS1R1"/>
    <property type="match status" value="1"/>
</dbReference>
<dbReference type="CDD" id="cd06363">
    <property type="entry name" value="PBP1_taste_receptor"/>
    <property type="match status" value="1"/>
</dbReference>
<dbReference type="FunFam" id="3.40.50.2300:FF:000016">
    <property type="entry name" value="Taste 1 receptor member 2"/>
    <property type="match status" value="1"/>
</dbReference>
<dbReference type="FunFam" id="2.10.50.30:FF:000004">
    <property type="entry name" value="Taste receptor type 1 member 3-like protein"/>
    <property type="match status" value="1"/>
</dbReference>
<dbReference type="Gene3D" id="3.40.50.2300">
    <property type="match status" value="2"/>
</dbReference>
<dbReference type="Gene3D" id="2.10.50.30">
    <property type="entry name" value="GPCR, family 3, nine cysteines domain"/>
    <property type="match status" value="1"/>
</dbReference>
<dbReference type="InterPro" id="IPR001828">
    <property type="entry name" value="ANF_lig-bd_rcpt"/>
</dbReference>
<dbReference type="InterPro" id="IPR000337">
    <property type="entry name" value="GPCR_3"/>
</dbReference>
<dbReference type="InterPro" id="IPR011500">
    <property type="entry name" value="GPCR_3_9-Cys_dom"/>
</dbReference>
<dbReference type="InterPro" id="IPR038550">
    <property type="entry name" value="GPCR_3_9-Cys_sf"/>
</dbReference>
<dbReference type="InterPro" id="IPR017978">
    <property type="entry name" value="GPCR_3_C"/>
</dbReference>
<dbReference type="InterPro" id="IPR000068">
    <property type="entry name" value="GPCR_3_Ca_sens_rcpt-rel"/>
</dbReference>
<dbReference type="InterPro" id="IPR017979">
    <property type="entry name" value="GPCR_3_CS"/>
</dbReference>
<dbReference type="InterPro" id="IPR028082">
    <property type="entry name" value="Peripla_BP_I"/>
</dbReference>
<dbReference type="PANTHER" id="PTHR24061">
    <property type="entry name" value="CALCIUM-SENSING RECEPTOR-RELATED"/>
    <property type="match status" value="1"/>
</dbReference>
<dbReference type="PANTHER" id="PTHR24061:SF3">
    <property type="entry name" value="TASTE RECEPTOR TYPE 1 MEMBER 1"/>
    <property type="match status" value="1"/>
</dbReference>
<dbReference type="Pfam" id="PF00003">
    <property type="entry name" value="7tm_3"/>
    <property type="match status" value="1"/>
</dbReference>
<dbReference type="Pfam" id="PF01094">
    <property type="entry name" value="ANF_receptor"/>
    <property type="match status" value="1"/>
</dbReference>
<dbReference type="Pfam" id="PF07562">
    <property type="entry name" value="NCD3G"/>
    <property type="match status" value="1"/>
</dbReference>
<dbReference type="PRINTS" id="PR00592">
    <property type="entry name" value="CASENSINGR"/>
</dbReference>
<dbReference type="PRINTS" id="PR00248">
    <property type="entry name" value="GPCRMGR"/>
</dbReference>
<dbReference type="SUPFAM" id="SSF53822">
    <property type="entry name" value="Periplasmic binding protein-like I"/>
    <property type="match status" value="1"/>
</dbReference>
<dbReference type="PROSITE" id="PS00980">
    <property type="entry name" value="G_PROTEIN_RECEP_F3_2"/>
    <property type="match status" value="1"/>
</dbReference>
<dbReference type="PROSITE" id="PS00981">
    <property type="entry name" value="G_PROTEIN_RECEP_F3_3"/>
    <property type="match status" value="1"/>
</dbReference>
<dbReference type="PROSITE" id="PS50259">
    <property type="entry name" value="G_PROTEIN_RECEP_F3_4"/>
    <property type="match status" value="1"/>
</dbReference>
<evidence type="ECO:0000255" key="1"/>
<evidence type="ECO:0000269" key="2">
    <source>
    </source>
</evidence>
<evidence type="ECO:0000269" key="3">
    <source>
    </source>
</evidence>
<evidence type="ECO:0000269" key="4">
    <source>
    </source>
</evidence>
<evidence type="ECO:0000305" key="5"/>
<keyword id="KW-1003">Cell membrane</keyword>
<keyword id="KW-0297">G-protein coupled receptor</keyword>
<keyword id="KW-0325">Glycoprotein</keyword>
<keyword id="KW-0472">Membrane</keyword>
<keyword id="KW-0675">Receptor</keyword>
<keyword id="KW-1185">Reference proteome</keyword>
<keyword id="KW-0716">Sensory transduction</keyword>
<keyword id="KW-0732">Signal</keyword>
<keyword id="KW-0919">Taste</keyword>
<keyword id="KW-0807">Transducer</keyword>
<keyword id="KW-0812">Transmembrane</keyword>
<keyword id="KW-1133">Transmembrane helix</keyword>
<protein>
    <recommendedName>
        <fullName>Taste receptor type 1 member 1</fullName>
    </recommendedName>
    <alternativeName>
        <fullName>G-protein coupled receptor 70</fullName>
    </alternativeName>
</protein>
<name>TS1R1_MOUSE</name>